<organism>
    <name type="scientific">Homo sapiens</name>
    <name type="common">Human</name>
    <dbReference type="NCBI Taxonomy" id="9606"/>
    <lineage>
        <taxon>Eukaryota</taxon>
        <taxon>Metazoa</taxon>
        <taxon>Chordata</taxon>
        <taxon>Craniata</taxon>
        <taxon>Vertebrata</taxon>
        <taxon>Euteleostomi</taxon>
        <taxon>Mammalia</taxon>
        <taxon>Eutheria</taxon>
        <taxon>Euarchontoglires</taxon>
        <taxon>Primates</taxon>
        <taxon>Haplorrhini</taxon>
        <taxon>Catarrhini</taxon>
        <taxon>Hominidae</taxon>
        <taxon>Homo</taxon>
    </lineage>
</organism>
<evidence type="ECO:0000269" key="1">
    <source>
    </source>
</evidence>
<evidence type="ECO:0000269" key="2">
    <source>
    </source>
</evidence>
<evidence type="ECO:0000269" key="3">
    <source>
    </source>
</evidence>
<evidence type="ECO:0000305" key="4"/>
<proteinExistence type="evidence at transcript level"/>
<feature type="chain" id="PRO_0000185209" description="Keratin-associated protein 10-1">
    <location>
        <begin position="1"/>
        <end position="282"/>
    </location>
</feature>
<feature type="repeat" description="1">
    <location>
        <begin position="26"/>
        <end position="30"/>
    </location>
</feature>
<feature type="repeat" description="2">
    <location>
        <begin position="31"/>
        <end position="35"/>
    </location>
</feature>
<feature type="repeat" description="3">
    <location>
        <begin position="36"/>
        <end position="40"/>
    </location>
</feature>
<feature type="repeat" description="4">
    <location>
        <begin position="57"/>
        <end position="61"/>
    </location>
</feature>
<feature type="repeat" description="5">
    <location>
        <begin position="79"/>
        <end position="83"/>
    </location>
</feature>
<feature type="repeat" description="6">
    <location>
        <begin position="89"/>
        <end position="93"/>
    </location>
</feature>
<feature type="repeat" description="7">
    <location>
        <begin position="99"/>
        <end position="103"/>
    </location>
</feature>
<feature type="repeat" description="8">
    <location>
        <begin position="104"/>
        <end position="108"/>
    </location>
</feature>
<feature type="repeat" description="9">
    <location>
        <begin position="109"/>
        <end position="113"/>
    </location>
</feature>
<feature type="repeat" description="10">
    <location>
        <begin position="121"/>
        <end position="125"/>
    </location>
</feature>
<feature type="repeat" description="11">
    <location>
        <begin position="131"/>
        <end position="135"/>
    </location>
</feature>
<feature type="repeat" description="12">
    <location>
        <begin position="141"/>
        <end position="145"/>
    </location>
</feature>
<feature type="repeat" description="13">
    <location>
        <begin position="146"/>
        <end position="150"/>
    </location>
</feature>
<feature type="repeat" description="14">
    <location>
        <begin position="163"/>
        <end position="167"/>
    </location>
</feature>
<feature type="repeat" description="15">
    <location>
        <begin position="173"/>
        <end position="177"/>
    </location>
</feature>
<feature type="repeat" description="16">
    <location>
        <begin position="183"/>
        <end position="187"/>
    </location>
</feature>
<feature type="repeat" description="17">
    <location>
        <begin position="193"/>
        <end position="197"/>
    </location>
</feature>
<feature type="repeat" description="18">
    <location>
        <begin position="198"/>
        <end position="202"/>
    </location>
</feature>
<feature type="repeat" description="19">
    <location>
        <begin position="210"/>
        <end position="214"/>
    </location>
</feature>
<feature type="repeat" description="20">
    <location>
        <begin position="220"/>
        <end position="224"/>
    </location>
</feature>
<feature type="repeat" description="21">
    <location>
        <begin position="225"/>
        <end position="229"/>
    </location>
</feature>
<feature type="repeat" description="22">
    <location>
        <begin position="244"/>
        <end position="248"/>
    </location>
</feature>
<feature type="repeat" description="23">
    <location>
        <begin position="251"/>
        <end position="255"/>
    </location>
</feature>
<feature type="repeat" description="24">
    <location>
        <begin position="262"/>
        <end position="266"/>
    </location>
</feature>
<feature type="region of interest" description="24 X 5 AA repeats of C-C-X(3)">
    <location>
        <begin position="26"/>
        <end position="266"/>
    </location>
</feature>
<feature type="sequence variant" id="VAR_017603" description="In dbSNP:rs233320." evidence="2 3">
    <original>P</original>
    <variation>L</variation>
    <location>
        <position position="39"/>
    </location>
</feature>
<feature type="sequence variant" id="VAR_047502" description="In dbSNP:rs233319." evidence="2 3">
    <original>V</original>
    <variation>M</variation>
    <location>
        <position position="101"/>
    </location>
</feature>
<feature type="sequence variant" id="VAR_047503" description="In dbSNP:rs233317." evidence="3">
    <original>R</original>
    <variation>Q</variation>
    <location>
        <position position="241"/>
    </location>
</feature>
<feature type="sequence variant" id="VAR_047504" description="In dbSNP:rs233316." evidence="3">
    <original>P</original>
    <variation>L</variation>
    <location>
        <position position="280"/>
    </location>
</feature>
<feature type="sequence conflict" description="In Ref. 3; AAI20960." evidence="4" ref="3">
    <original>A</original>
    <variation>T</variation>
    <location>
        <position position="2"/>
    </location>
</feature>
<feature type="sequence conflict" description="In Ref. 1; BAD01534 and 3; AAI20960/AAI20961." evidence="4" ref="1 3">
    <original>D</original>
    <variation>S</variation>
    <location>
        <position position="159"/>
    </location>
</feature>
<keyword id="KW-0416">Keratin</keyword>
<keyword id="KW-1185">Reference proteome</keyword>
<keyword id="KW-0677">Repeat</keyword>
<gene>
    <name type="primary">KRTAP10-1</name>
    <name type="synonym">KAP10.1</name>
    <name type="synonym">KAP18-1</name>
    <name type="synonym">KRTAP10.1</name>
    <name type="synonym">KRTAP18-1</name>
    <name type="synonym">KRTAP18.1</name>
</gene>
<accession>P60331</accession>
<accession>Q0VAR0</accession>
<accession>Q0VAR1</accession>
<protein>
    <recommendedName>
        <fullName>Keratin-associated protein 10-1</fullName>
    </recommendedName>
    <alternativeName>
        <fullName>High sulfur keratin-associated protein 10.1</fullName>
    </alternativeName>
    <alternativeName>
        <fullName>Keratin-associated protein 10.1</fullName>
    </alternativeName>
    <alternativeName>
        <fullName>Keratin-associated protein 18-1</fullName>
    </alternativeName>
    <alternativeName>
        <fullName>Keratin-associated protein 18.1</fullName>
    </alternativeName>
</protein>
<name>KR101_HUMAN</name>
<dbReference type="EMBL" id="AB076347">
    <property type="protein sequence ID" value="BAD01534.1"/>
    <property type="molecule type" value="mRNA"/>
</dbReference>
<dbReference type="EMBL" id="AP001067">
    <property type="status" value="NOT_ANNOTATED_CDS"/>
    <property type="molecule type" value="Genomic_DNA"/>
</dbReference>
<dbReference type="EMBL" id="BC120959">
    <property type="protein sequence ID" value="AAI20960.1"/>
    <property type="molecule type" value="mRNA"/>
</dbReference>
<dbReference type="EMBL" id="BC120960">
    <property type="protein sequence ID" value="AAI20961.1"/>
    <property type="molecule type" value="mRNA"/>
</dbReference>
<dbReference type="EMBL" id="AJ566380">
    <property type="protein sequence ID" value="CAD97461.1"/>
    <property type="molecule type" value="mRNA"/>
</dbReference>
<dbReference type="CCDS" id="CCDS42954.1"/>
<dbReference type="RefSeq" id="NP_941964.2">
    <property type="nucleotide sequence ID" value="NM_198691.3"/>
</dbReference>
<dbReference type="BioGRID" id="132128">
    <property type="interactions" value="153"/>
</dbReference>
<dbReference type="FunCoup" id="P60331">
    <property type="interactions" value="29"/>
</dbReference>
<dbReference type="IntAct" id="P60331">
    <property type="interactions" value="6"/>
</dbReference>
<dbReference type="STRING" id="9606.ENSP00000383226"/>
<dbReference type="BioMuta" id="KRTAP10-1"/>
<dbReference type="DMDM" id="215274024"/>
<dbReference type="MassIVE" id="P60331"/>
<dbReference type="PaxDb" id="9606-ENSP00000383226"/>
<dbReference type="PeptideAtlas" id="P60331"/>
<dbReference type="DNASU" id="386677"/>
<dbReference type="Ensembl" id="ENST00000400375.1">
    <property type="protein sequence ID" value="ENSP00000383226.1"/>
    <property type="gene ID" value="ENSG00000215455.4"/>
</dbReference>
<dbReference type="GeneID" id="386677"/>
<dbReference type="KEGG" id="hsa:386677"/>
<dbReference type="MANE-Select" id="ENST00000400375.1">
    <property type="protein sequence ID" value="ENSP00000383226.1"/>
    <property type="RefSeq nucleotide sequence ID" value="NM_198691.3"/>
    <property type="RefSeq protein sequence ID" value="NP_941964.2"/>
</dbReference>
<dbReference type="UCSC" id="uc002zfh.2">
    <property type="organism name" value="human"/>
</dbReference>
<dbReference type="AGR" id="HGNC:22966"/>
<dbReference type="CTD" id="386677"/>
<dbReference type="DisGeNET" id="386677"/>
<dbReference type="GeneCards" id="KRTAP10-1"/>
<dbReference type="HGNC" id="HGNC:22966">
    <property type="gene designation" value="KRTAP10-1"/>
</dbReference>
<dbReference type="HPA" id="ENSG00000215455">
    <property type="expression patterns" value="Tissue enriched (skin)"/>
</dbReference>
<dbReference type="neXtProt" id="NX_P60331"/>
<dbReference type="OpenTargets" id="ENSG00000215455"/>
<dbReference type="PharmGKB" id="PA134884303"/>
<dbReference type="VEuPathDB" id="HostDB:ENSG00000215455"/>
<dbReference type="eggNOG" id="KOG4726">
    <property type="taxonomic scope" value="Eukaryota"/>
</dbReference>
<dbReference type="GeneTree" id="ENSGT00940000158579"/>
<dbReference type="HOGENOM" id="CLU_062832_0_0_1"/>
<dbReference type="InParanoid" id="P60331"/>
<dbReference type="OMA" id="CCDECAD"/>
<dbReference type="PAN-GO" id="P60331">
    <property type="GO annotations" value="0 GO annotations based on evolutionary models"/>
</dbReference>
<dbReference type="TreeFam" id="TF351356"/>
<dbReference type="PathwayCommons" id="P60331"/>
<dbReference type="Reactome" id="R-HSA-6805567">
    <property type="pathway name" value="Keratinization"/>
</dbReference>
<dbReference type="SignaLink" id="P60331"/>
<dbReference type="BioGRID-ORCS" id="386677">
    <property type="hits" value="35 hits in 1039 CRISPR screens"/>
</dbReference>
<dbReference type="GenomeRNAi" id="386677"/>
<dbReference type="Pharos" id="P60331">
    <property type="development level" value="Tdark"/>
</dbReference>
<dbReference type="PRO" id="PR:P60331"/>
<dbReference type="Proteomes" id="UP000005640">
    <property type="component" value="Chromosome 21"/>
</dbReference>
<dbReference type="RNAct" id="P60331">
    <property type="molecule type" value="protein"/>
</dbReference>
<dbReference type="Bgee" id="ENSG00000215455">
    <property type="expression patterns" value="Expressed in skin of abdomen and 4 other cell types or tissues"/>
</dbReference>
<dbReference type="GO" id="GO:0005829">
    <property type="term" value="C:cytosol"/>
    <property type="evidence" value="ECO:0000304"/>
    <property type="project" value="Reactome"/>
</dbReference>
<dbReference type="GO" id="GO:0045095">
    <property type="term" value="C:keratin filament"/>
    <property type="evidence" value="ECO:0007669"/>
    <property type="project" value="InterPro"/>
</dbReference>
<dbReference type="InterPro" id="IPR002494">
    <property type="entry name" value="KAP"/>
</dbReference>
<dbReference type="PANTHER" id="PTHR23262">
    <property type="entry name" value="KERATIN ASSOCIATED PROTEIN"/>
    <property type="match status" value="1"/>
</dbReference>
<dbReference type="PANTHER" id="PTHR23262:SF170">
    <property type="entry name" value="KERATIN-ASSOCIATED PROTEIN 10-9"/>
    <property type="match status" value="1"/>
</dbReference>
<dbReference type="Pfam" id="PF13885">
    <property type="entry name" value="Keratin_B2_2"/>
    <property type="match status" value="4"/>
</dbReference>
<reference key="1">
    <citation type="journal article" date="2004" name="Genomics">
        <title>A cluster of 21 keratin-associated protein genes within introns of another gene on human chromosome 21q22.3.</title>
        <authorList>
            <person name="Shibuya K."/>
            <person name="Obayashi I."/>
            <person name="Asakawa S."/>
            <person name="Minoshima S."/>
            <person name="Kudoh J."/>
            <person name="Shimizu N."/>
        </authorList>
    </citation>
    <scope>NUCLEOTIDE SEQUENCE [MRNA]</scope>
    <scope>TISSUE SPECIFICITY</scope>
    <scope>VARIANTS LEU-39 AND MET-101</scope>
    <source>
        <tissue>Hair root</tissue>
    </source>
</reference>
<reference key="2">
    <citation type="journal article" date="2000" name="Nature">
        <title>The DNA sequence of human chromosome 21.</title>
        <authorList>
            <person name="Hattori M."/>
            <person name="Fujiyama A."/>
            <person name="Taylor T.D."/>
            <person name="Watanabe H."/>
            <person name="Yada T."/>
            <person name="Park H.-S."/>
            <person name="Toyoda A."/>
            <person name="Ishii K."/>
            <person name="Totoki Y."/>
            <person name="Choi D.-K."/>
            <person name="Groner Y."/>
            <person name="Soeda E."/>
            <person name="Ohki M."/>
            <person name="Takagi T."/>
            <person name="Sakaki Y."/>
            <person name="Taudien S."/>
            <person name="Blechschmidt K."/>
            <person name="Polley A."/>
            <person name="Menzel U."/>
            <person name="Delabar J."/>
            <person name="Kumpf K."/>
            <person name="Lehmann R."/>
            <person name="Patterson D."/>
            <person name="Reichwald K."/>
            <person name="Rump A."/>
            <person name="Schillhabel M."/>
            <person name="Schudy A."/>
            <person name="Zimmermann W."/>
            <person name="Rosenthal A."/>
            <person name="Kudoh J."/>
            <person name="Shibuya K."/>
            <person name="Kawasaki K."/>
            <person name="Asakawa S."/>
            <person name="Shintani A."/>
            <person name="Sasaki T."/>
            <person name="Nagamine K."/>
            <person name="Mitsuyama S."/>
            <person name="Antonarakis S.E."/>
            <person name="Minoshima S."/>
            <person name="Shimizu N."/>
            <person name="Nordsiek G."/>
            <person name="Hornischer K."/>
            <person name="Brandt P."/>
            <person name="Scharfe M."/>
            <person name="Schoen O."/>
            <person name="Desario A."/>
            <person name="Reichelt J."/>
            <person name="Kauer G."/>
            <person name="Bloecker H."/>
            <person name="Ramser J."/>
            <person name="Beck A."/>
            <person name="Klages S."/>
            <person name="Hennig S."/>
            <person name="Riesselmann L."/>
            <person name="Dagand E."/>
            <person name="Wehrmeyer S."/>
            <person name="Borzym K."/>
            <person name="Gardiner K."/>
            <person name="Nizetic D."/>
            <person name="Francis F."/>
            <person name="Lehrach H."/>
            <person name="Reinhardt R."/>
            <person name="Yaspo M.-L."/>
        </authorList>
    </citation>
    <scope>NUCLEOTIDE SEQUENCE [LARGE SCALE GENOMIC DNA]</scope>
</reference>
<reference key="3">
    <citation type="journal article" date="2004" name="Genome Res.">
        <title>The status, quality, and expansion of the NIH full-length cDNA project: the Mammalian Gene Collection (MGC).</title>
        <authorList>
            <consortium name="The MGC Project Team"/>
        </authorList>
    </citation>
    <scope>NUCLEOTIDE SEQUENCE [LARGE SCALE MRNA]</scope>
    <scope>VARIANTS LEU-39; MET-101; GLN-241 AND LEU-280</scope>
</reference>
<reference key="4">
    <citation type="journal article" date="2004" name="J. Invest. Dermatol.">
        <title>Hair keratin associated proteins: characterization of a second high sulfur KAP gene domain on human chromosome 21.</title>
        <authorList>
            <person name="Rogers M.A."/>
            <person name="Langbein L."/>
            <person name="Winter H."/>
            <person name="Beckmann I."/>
            <person name="Praetzel S."/>
            <person name="Schweizer J."/>
        </authorList>
    </citation>
    <scope>NUCLEOTIDE SEQUENCE [MRNA] OF 281-282</scope>
    <scope>TISSUE SPECIFICITY</scope>
    <source>
        <tissue>Scalp</tissue>
    </source>
</reference>
<sequence>MAASTMSVCSSACSDSWQVDACPESCCEPHCCALSCCAPAPCLTLVCTPVSRVSSPCCQAACEPSPCQSGCTSSCTPSCCQQSSCQPACCTSSPCQQACCVPVCCKPVCCLPTCSKDSSSCCQQSSCQPTCCASSSSQQSCCVPVCCKPVCYVPTCSEDSSSCCQQSSCHPACCTSSPCQQACCVPVRCKPVCCKPICCVPVCSGASTSCCQQSSCQPACCTTSCCRPSSSVSLLCRPVCRPACCMPVSSCCAPASSCQASCCRPASCVSLLCRPACSRPAC</sequence>
<comment type="function">
    <text>In the hair cortex, hair keratin intermediate filaments are embedded in an interfilamentous matrix, consisting of hair keratin-associated proteins (KRTAP), which are essential for the formation of a rigid and resistant hair shaft through their extensive disulfide bond cross-linking with abundant cysteine residues of hair keratins. The matrix proteins include the high-sulfur and high-glycine-tyrosine keratins.</text>
</comment>
<comment type="subunit">
    <text>Interacts with hair keratins.</text>
</comment>
<comment type="tissue specificity">
    <text evidence="1 2">Restricted to a narrow region of the hair fiber cuticle, lying approximately 20 cell layers above the apex of the dermal papilla of the hair root; not detected in any other tissues.</text>
</comment>
<comment type="similarity">
    <text evidence="4">Belongs to the KRTAP type 10 family.</text>
</comment>